<organism>
    <name type="scientific">Bat coronavirus Rp3/2004</name>
    <name type="common">BtCoV/Rp3/2004</name>
    <name type="synonym">SARS-like coronavirus Rp3</name>
    <dbReference type="NCBI Taxonomy" id="349344"/>
    <lineage>
        <taxon>Viruses</taxon>
        <taxon>Riboviria</taxon>
        <taxon>Orthornavirae</taxon>
        <taxon>Pisuviricota</taxon>
        <taxon>Pisoniviricetes</taxon>
        <taxon>Nidovirales</taxon>
        <taxon>Cornidovirineae</taxon>
        <taxon>Coronaviridae</taxon>
        <taxon>Orthocoronavirinae</taxon>
        <taxon>Betacoronavirus</taxon>
        <taxon>Sarbecovirus</taxon>
        <taxon>Severe acute respiratory syndrome coronavirus</taxon>
    </lineage>
</organism>
<proteinExistence type="inferred from homology"/>
<evidence type="ECO:0000255" key="1"/>
<evidence type="ECO:0000255" key="2">
    <source>
        <dbReference type="PROSITE-ProRule" id="PRU01309"/>
    </source>
</evidence>
<gene>
    <name type="ORF">8</name>
</gene>
<feature type="signal peptide" evidence="1">
    <location>
        <begin position="1"/>
        <end position="15"/>
    </location>
</feature>
<feature type="chain" id="PRO_0000043094" description="Non-structural protein 8">
    <location>
        <begin position="16"/>
        <end position="121"/>
    </location>
</feature>
<feature type="domain" description="SARS ORF8 Ig-like" evidence="2">
    <location>
        <begin position="19"/>
        <end position="121"/>
    </location>
</feature>
<feature type="disulfide bond" description="Interchain" evidence="2">
    <location>
        <position position="20"/>
    </location>
</feature>
<feature type="disulfide bond" evidence="2">
    <location>
        <begin position="25"/>
        <end position="90"/>
    </location>
</feature>
<feature type="disulfide bond" evidence="2">
    <location>
        <begin position="37"/>
        <end position="102"/>
    </location>
</feature>
<feature type="disulfide bond" evidence="2">
    <location>
        <begin position="61"/>
        <end position="83"/>
    </location>
</feature>
<accession>Q3I5I8</accession>
<name>NS8_BCRP3</name>
<protein>
    <recommendedName>
        <fullName>Non-structural protein 8</fullName>
        <shortName>ns8</shortName>
    </recommendedName>
    <alternativeName>
        <fullName>Accessory protein 8</fullName>
    </alternativeName>
</protein>
<sequence length="121" mass="14087">MKLLIVFGLLTSVYCIHKECSIQECCENQPYQIEDPCPIHYYSDWFIKIGSRKSARLVQLCEGDYGKRIPIHYQMFGNYTISCEPLEINCQAPPVGSLIVRCSYDYDFVEHHDVRVVLDFV</sequence>
<dbReference type="EMBL" id="DQ071615">
    <property type="protein sequence ID" value="AAZ67059.1"/>
    <property type="molecule type" value="Genomic_RNA"/>
</dbReference>
<dbReference type="SMR" id="Q3I5I8"/>
<dbReference type="Proteomes" id="UP000006570">
    <property type="component" value="Genome"/>
</dbReference>
<dbReference type="CDD" id="cd21643">
    <property type="entry name" value="ORF8-Ig_bat_SARS-CoV_HKU3-1_type-III-like"/>
    <property type="match status" value="1"/>
</dbReference>
<dbReference type="InterPro" id="IPR044393">
    <property type="entry name" value="ORF8_bat_SARS-CoV_HKU3-1-like"/>
</dbReference>
<dbReference type="InterPro" id="IPR022722">
    <property type="entry name" value="ORF8_betacoronavirus"/>
</dbReference>
<dbReference type="InterPro" id="IPR046444">
    <property type="entry name" value="SARS_ORF8_IG"/>
</dbReference>
<dbReference type="Pfam" id="PF12093">
    <property type="entry name" value="bCoV_NS8"/>
    <property type="match status" value="1"/>
</dbReference>
<dbReference type="PROSITE" id="PS51964">
    <property type="entry name" value="SARS_ORF8_IG"/>
    <property type="match status" value="1"/>
</dbReference>
<comment type="miscellaneous">
    <text>This protein corresponds nearly to the fused 8a and 8b proteins of SARS-CoV.</text>
</comment>
<comment type="miscellaneous">
    <text>Bat coronavirus rp3 is highly similar to SARS-CoV (SARS-like).</text>
</comment>
<keyword id="KW-1015">Disulfide bond</keyword>
<keyword id="KW-0732">Signal</keyword>
<reference key="1">
    <citation type="journal article" date="2005" name="Science">
        <title>Bats are natural reservoirs of SARS-like coronaviruses.</title>
        <authorList>
            <person name="Li W."/>
            <person name="Shi Z."/>
            <person name="Yu M."/>
            <person name="Ren W."/>
            <person name="Smith C."/>
            <person name="Epstein J.H."/>
            <person name="Wang H."/>
            <person name="Crameri G."/>
            <person name="Hu Z."/>
            <person name="Zhang H."/>
            <person name="Zhang J."/>
            <person name="McEachern J."/>
            <person name="Field H."/>
            <person name="Daszak P."/>
            <person name="Eaton B.T."/>
            <person name="Zhang S."/>
            <person name="Wang L.F."/>
        </authorList>
    </citation>
    <scope>NUCLEOTIDE SEQUENCE [GENOMIC RNA]</scope>
</reference>
<organismHost>
    <name type="scientific">Rhinolophus ferrumequinum</name>
    <name type="common">Greater horseshoe bat</name>
    <dbReference type="NCBI Taxonomy" id="59479"/>
</organismHost>
<organismHost>
    <name type="scientific">Rhinolophus macrotis</name>
    <name type="common">Big-eared horseshoe bat</name>
    <dbReference type="NCBI Taxonomy" id="196889"/>
</organismHost>
<organismHost>
    <name type="scientific">Rhinolophus pearsonii</name>
    <dbReference type="NCBI Taxonomy" id="188571"/>
</organismHost>
<organismHost>
    <name type="scientific">Rhinolophus sinicus</name>
    <name type="common">Chinese rufous horseshoe bat</name>
    <dbReference type="NCBI Taxonomy" id="89399"/>
</organismHost>